<comment type="function">
    <text evidence="1">Catalytic subunit of DNA primase, an RNA polymerase that catalyzes the synthesis of short RNA molecules used as primers for DNA polymerase during DNA replication. The small subunit contains the primase catalytic core and has DNA synthesis activity on its own. Binding to the large subunit stabilizes and modulates the activity, increasing the rate of DNA synthesis while decreasing the length of the DNA fragments, and conferring RNA synthesis capability. The DNA polymerase activity may enable DNA primase to also catalyze primer extension after primer synthesis. May also play a role in DNA repair.</text>
</comment>
<comment type="cofactor">
    <cofactor evidence="1">
        <name>Mg(2+)</name>
        <dbReference type="ChEBI" id="CHEBI:18420"/>
    </cofactor>
    <cofactor evidence="1">
        <name>Mn(2+)</name>
        <dbReference type="ChEBI" id="CHEBI:29035"/>
    </cofactor>
</comment>
<comment type="subunit">
    <text evidence="1">Heterodimer of a small subunit (PriS) and a large subunit (PriL).</text>
</comment>
<comment type="similarity">
    <text evidence="1">Belongs to the eukaryotic-type primase small subunit family.</text>
</comment>
<keyword id="KW-0235">DNA replication</keyword>
<keyword id="KW-0240">DNA-directed RNA polymerase</keyword>
<keyword id="KW-0460">Magnesium</keyword>
<keyword id="KW-0464">Manganese</keyword>
<keyword id="KW-0479">Metal-binding</keyword>
<keyword id="KW-0548">Nucleotidyltransferase</keyword>
<keyword id="KW-0639">Primosome</keyword>
<keyword id="KW-1185">Reference proteome</keyword>
<keyword id="KW-0804">Transcription</keyword>
<keyword id="KW-0808">Transferase</keyword>
<evidence type="ECO:0000255" key="1">
    <source>
        <dbReference type="HAMAP-Rule" id="MF_00700"/>
    </source>
</evidence>
<reference key="1">
    <citation type="journal article" date="2002" name="Genome Res.">
        <title>The genome of Methanosarcina acetivorans reveals extensive metabolic and physiological diversity.</title>
        <authorList>
            <person name="Galagan J.E."/>
            <person name="Nusbaum C."/>
            <person name="Roy A."/>
            <person name="Endrizzi M.G."/>
            <person name="Macdonald P."/>
            <person name="FitzHugh W."/>
            <person name="Calvo S."/>
            <person name="Engels R."/>
            <person name="Smirnov S."/>
            <person name="Atnoor D."/>
            <person name="Brown A."/>
            <person name="Allen N."/>
            <person name="Naylor J."/>
            <person name="Stange-Thomann N."/>
            <person name="DeArellano K."/>
            <person name="Johnson R."/>
            <person name="Linton L."/>
            <person name="McEwan P."/>
            <person name="McKernan K."/>
            <person name="Talamas J."/>
            <person name="Tirrell A."/>
            <person name="Ye W."/>
            <person name="Zimmer A."/>
            <person name="Barber R.D."/>
            <person name="Cann I."/>
            <person name="Graham D.E."/>
            <person name="Grahame D.A."/>
            <person name="Guss A.M."/>
            <person name="Hedderich R."/>
            <person name="Ingram-Smith C."/>
            <person name="Kuettner H.C."/>
            <person name="Krzycki J.A."/>
            <person name="Leigh J.A."/>
            <person name="Li W."/>
            <person name="Liu J."/>
            <person name="Mukhopadhyay B."/>
            <person name="Reeve J.N."/>
            <person name="Smith K."/>
            <person name="Springer T.A."/>
            <person name="Umayam L.A."/>
            <person name="White O."/>
            <person name="White R.H."/>
            <person name="de Macario E.C."/>
            <person name="Ferry J.G."/>
            <person name="Jarrell K.F."/>
            <person name="Jing H."/>
            <person name="Macario A.J.L."/>
            <person name="Paulsen I.T."/>
            <person name="Pritchett M."/>
            <person name="Sowers K.R."/>
            <person name="Swanson R.V."/>
            <person name="Zinder S.H."/>
            <person name="Lander E."/>
            <person name="Metcalf W.W."/>
            <person name="Birren B."/>
        </authorList>
    </citation>
    <scope>NUCLEOTIDE SEQUENCE [LARGE SCALE GENOMIC DNA]</scope>
    <source>
        <strain>ATCC 35395 / DSM 2834 / JCM 12185 / C2A</strain>
    </source>
</reference>
<accession>Q8TSZ5</accession>
<proteinExistence type="inferred from homology"/>
<dbReference type="EC" id="2.7.7.-" evidence="1"/>
<dbReference type="EMBL" id="AE010299">
    <property type="protein sequence ID" value="AAM04090.1"/>
    <property type="molecule type" value="Genomic_DNA"/>
</dbReference>
<dbReference type="RefSeq" id="WP_011020695.1">
    <property type="nucleotide sequence ID" value="NC_003552.1"/>
</dbReference>
<dbReference type="SMR" id="Q8TSZ5"/>
<dbReference type="FunCoup" id="Q8TSZ5">
    <property type="interactions" value="12"/>
</dbReference>
<dbReference type="STRING" id="188937.MA_0648"/>
<dbReference type="EnsemblBacteria" id="AAM04090">
    <property type="protein sequence ID" value="AAM04090"/>
    <property type="gene ID" value="MA_0648"/>
</dbReference>
<dbReference type="GeneID" id="1472540"/>
<dbReference type="KEGG" id="mac:MA_0648"/>
<dbReference type="HOGENOM" id="CLU_056123_1_0_2"/>
<dbReference type="InParanoid" id="Q8TSZ5"/>
<dbReference type="OrthoDB" id="31125at2157"/>
<dbReference type="PhylomeDB" id="Q8TSZ5"/>
<dbReference type="Proteomes" id="UP000002487">
    <property type="component" value="Chromosome"/>
</dbReference>
<dbReference type="GO" id="GO:0000428">
    <property type="term" value="C:DNA-directed RNA polymerase complex"/>
    <property type="evidence" value="ECO:0007669"/>
    <property type="project" value="UniProtKB-KW"/>
</dbReference>
<dbReference type="GO" id="GO:1990077">
    <property type="term" value="C:primosome complex"/>
    <property type="evidence" value="ECO:0007669"/>
    <property type="project" value="UniProtKB-KW"/>
</dbReference>
<dbReference type="GO" id="GO:0003899">
    <property type="term" value="F:DNA-directed RNA polymerase activity"/>
    <property type="evidence" value="ECO:0007669"/>
    <property type="project" value="InterPro"/>
</dbReference>
<dbReference type="GO" id="GO:0046872">
    <property type="term" value="F:metal ion binding"/>
    <property type="evidence" value="ECO:0007669"/>
    <property type="project" value="UniProtKB-KW"/>
</dbReference>
<dbReference type="GO" id="GO:0006269">
    <property type="term" value="P:DNA replication, synthesis of primer"/>
    <property type="evidence" value="ECO:0000318"/>
    <property type="project" value="GO_Central"/>
</dbReference>
<dbReference type="CDD" id="cd04860">
    <property type="entry name" value="AE_Prim_S"/>
    <property type="match status" value="1"/>
</dbReference>
<dbReference type="Gene3D" id="3.90.920.10">
    <property type="entry name" value="DNA primase, PRIM domain"/>
    <property type="match status" value="1"/>
</dbReference>
<dbReference type="HAMAP" id="MF_00700">
    <property type="entry name" value="DNA_primase_sml_arc"/>
    <property type="match status" value="1"/>
</dbReference>
<dbReference type="InterPro" id="IPR002755">
    <property type="entry name" value="DNA_primase_S"/>
</dbReference>
<dbReference type="InterPro" id="IPR014052">
    <property type="entry name" value="DNA_primase_ssu_euk/arc"/>
</dbReference>
<dbReference type="InterPro" id="IPR023639">
    <property type="entry name" value="DNA_primase_ssu_PriS"/>
</dbReference>
<dbReference type="NCBIfam" id="TIGR00335">
    <property type="entry name" value="primase_sml"/>
    <property type="match status" value="1"/>
</dbReference>
<dbReference type="PANTHER" id="PTHR10536">
    <property type="entry name" value="DNA PRIMASE SMALL SUBUNIT"/>
    <property type="match status" value="1"/>
</dbReference>
<dbReference type="Pfam" id="PF01896">
    <property type="entry name" value="DNA_primase_S"/>
    <property type="match status" value="1"/>
</dbReference>
<dbReference type="SUPFAM" id="SSF56747">
    <property type="entry name" value="Prim-pol domain"/>
    <property type="match status" value="1"/>
</dbReference>
<name>PRIS_METAC</name>
<gene>
    <name evidence="1" type="primary">priS</name>
    <name type="synonym">priA</name>
    <name type="ordered locus">MA_0648</name>
</gene>
<feature type="chain" id="PRO_0000046741" description="DNA primase small subunit PriS">
    <location>
        <begin position="1"/>
        <end position="414"/>
    </location>
</feature>
<feature type="active site" evidence="1">
    <location>
        <position position="98"/>
    </location>
</feature>
<feature type="active site" evidence="1">
    <location>
        <position position="100"/>
    </location>
</feature>
<feature type="active site" evidence="1">
    <location>
        <position position="312"/>
    </location>
</feature>
<sequence length="414" mass="47615">MDKRTTQFLKSRFQSYYKNAEIGLPDHLPNREWAFIFYDDMPEKMMHRHKSFGSPGEALDYLYGMAPAHVYNSTAYYEYPDAKKMNEKNWLGAELIFDLDADHLPNAPRNYADMLELVKKEALKLLDFLLDDFGFSEQEIQLVFSGGRGYHFHIVSPKVLTLGSSERREIVNYVSGRDLEFKYFFREVAMDGDFGTGSKTFKGMKNVPMKCTLVGYDSGWGRRIALYLTDYMKRESEKKYKKDMFPELRRHEKVGDTTIKKLINIANSETGLKDILEKGRLDFDVRNFKEIAAYFMQESAEDFLHRFGASVDEPVTADIKRLIRVPGSLHGGSGMLVKKLALSELEEFDPLNDAVVFGERPVKITASKPFSVQLKGKDLRIEEGIQEVPEYAAVYLICRGVAEYGHRRNQPDTV</sequence>
<organism>
    <name type="scientific">Methanosarcina acetivorans (strain ATCC 35395 / DSM 2834 / JCM 12185 / C2A)</name>
    <dbReference type="NCBI Taxonomy" id="188937"/>
    <lineage>
        <taxon>Archaea</taxon>
        <taxon>Methanobacteriati</taxon>
        <taxon>Methanobacteriota</taxon>
        <taxon>Stenosarchaea group</taxon>
        <taxon>Methanomicrobia</taxon>
        <taxon>Methanosarcinales</taxon>
        <taxon>Methanosarcinaceae</taxon>
        <taxon>Methanosarcina</taxon>
    </lineage>
</organism>
<protein>
    <recommendedName>
        <fullName evidence="1">DNA primase small subunit PriS</fullName>
        <ecNumber evidence="1">2.7.7.-</ecNumber>
    </recommendedName>
</protein>